<feature type="signal peptide" evidence="2">
    <location>
        <begin position="1"/>
        <end position="19"/>
    </location>
</feature>
<feature type="propeptide" id="PRO_0000420146" evidence="4">
    <location>
        <begin position="20"/>
        <end position="27"/>
    </location>
</feature>
<feature type="chain" id="PRO_0000161696" description="Acidic phospholipase A2 homolog textilotoxin C chain">
    <location>
        <begin position="28"/>
        <end position="145"/>
    </location>
</feature>
<feature type="disulfide bond" evidence="1">
    <location>
        <begin position="38"/>
        <end position="98"/>
    </location>
</feature>
<feature type="disulfide bond" evidence="1">
    <location>
        <begin position="54"/>
        <end position="144"/>
    </location>
</feature>
<feature type="disulfide bond" evidence="1">
    <location>
        <begin position="56"/>
        <end position="72"/>
    </location>
</feature>
<feature type="disulfide bond" evidence="1">
    <location>
        <begin position="71"/>
        <end position="125"/>
    </location>
</feature>
<feature type="disulfide bond" evidence="1">
    <location>
        <begin position="78"/>
        <end position="118"/>
    </location>
</feature>
<feature type="disulfide bond" evidence="1">
    <location>
        <begin position="87"/>
        <end position="111"/>
    </location>
</feature>
<feature type="disulfide bond" evidence="1">
    <location>
        <begin position="105"/>
        <end position="116"/>
    </location>
</feature>
<feature type="sequence conflict" description="In Ref. 2; AA sequence." evidence="5" ref="2">
    <original>D</original>
    <variation>N</variation>
    <location>
        <position position="95"/>
    </location>
</feature>
<feature type="sequence conflict" description="In Ref. 1; AAZ22648." evidence="5" ref="1">
    <location>
        <begin position="97"/>
        <end position="103"/>
    </location>
</feature>
<feature type="sequence conflict" description="In Ref. 1; AAZ22647." evidence="5" ref="1">
    <original>N</original>
    <variation>S</variation>
    <location>
        <position position="137"/>
    </location>
</feature>
<comment type="function">
    <text evidence="4">Snake venom oligomeric phospholipase A2 that has potent presynaptic neurotoxicity. Chain C is not itself neurotoxic, but it is essential for the neurotoxicity of textilotoxin. Chain C possesses a very low phospholipase activity.</text>
</comment>
<comment type="subunit">
    <text evidence="3 4">Heterohexamer. 2 forms exist: 2 A or 2 B chains, 2 C chains and 2 covalently-linked D chains, and 1 A or 1 B, 1 C, 2 covalently-linked D chains and 2 differentially glycosylated covalently-linked D chains. Textilotoxin was originally described as pentameric (PubMed:8431471).</text>
</comment>
<comment type="subcellular location">
    <subcellularLocation>
        <location>Secreted</location>
    </subcellularLocation>
</comment>
<comment type="tissue specificity">
    <text>Expressed by the venom gland.</text>
</comment>
<comment type="toxic dose">
    <text evidence="4">Oligomer: LD(50) is 1 ug/kg by intraperitoneal injection into mice.</text>
</comment>
<comment type="similarity">
    <text evidence="5">Belongs to the phospholipase A2 family. Group I subfamily. D49 sub-subfamily.</text>
</comment>
<organism>
    <name type="scientific">Pseudonaja textilis</name>
    <name type="common">Eastern brown snake</name>
    <dbReference type="NCBI Taxonomy" id="8673"/>
    <lineage>
        <taxon>Eukaryota</taxon>
        <taxon>Metazoa</taxon>
        <taxon>Chordata</taxon>
        <taxon>Craniata</taxon>
        <taxon>Vertebrata</taxon>
        <taxon>Euteleostomi</taxon>
        <taxon>Lepidosauria</taxon>
        <taxon>Squamata</taxon>
        <taxon>Bifurcata</taxon>
        <taxon>Unidentata</taxon>
        <taxon>Episquamata</taxon>
        <taxon>Toxicofera</taxon>
        <taxon>Serpentes</taxon>
        <taxon>Colubroidea</taxon>
        <taxon>Elapidae</taxon>
        <taxon>Hydrophiinae</taxon>
        <taxon>Pseudonaja</taxon>
    </lineage>
</organism>
<evidence type="ECO:0000250" key="1"/>
<evidence type="ECO:0000255" key="2"/>
<evidence type="ECO:0000269" key="3">
    <source>
    </source>
</evidence>
<evidence type="ECO:0000269" key="4">
    <source>
    </source>
</evidence>
<evidence type="ECO:0000305" key="5"/>
<keyword id="KW-0903">Direct protein sequencing</keyword>
<keyword id="KW-1015">Disulfide bond</keyword>
<keyword id="KW-0528">Neurotoxin</keyword>
<keyword id="KW-0638">Presynaptic neurotoxin</keyword>
<keyword id="KW-1185">Reference proteome</keyword>
<keyword id="KW-0964">Secreted</keyword>
<keyword id="KW-0732">Signal</keyword>
<keyword id="KW-0800">Toxin</keyword>
<reference key="1">
    <citation type="journal article" date="2005" name="Cell. Mol. Life Sci.">
        <title>Identification and analysis of venom gland-specific genes from the coastal taipan (Oxyuranus scutellatus) and related species.</title>
        <authorList>
            <person name="St Pierre L."/>
            <person name="Woods R."/>
            <person name="Earl S.T.H."/>
            <person name="Masci P.P."/>
            <person name="Lavin M.F."/>
        </authorList>
    </citation>
    <scope>NUCLEOTIDE SEQUENCE [MRNA]</scope>
    <source>
        <tissue>Venom gland</tissue>
    </source>
</reference>
<reference key="2">
    <citation type="journal article" date="1993" name="Biochim. Biophys. Acta">
        <title>Studies on the subunit structure of textilotoxin, a potent presynaptic neurotoxin from the venom of the Australian common brown snake (Pseudonaja textilis). 3. The complete amino-acid sequences of all the subunits.</title>
        <authorList>
            <person name="Pearson J.A."/>
            <person name="Tyler M.I."/>
            <person name="Retson K.V."/>
            <person name="Howden M.E.H."/>
        </authorList>
    </citation>
    <scope>PROTEIN SEQUENCE OF 28-145</scope>
    <scope>FUNCTION</scope>
    <scope>TOXIC DOSE</scope>
    <source>
        <tissue>Venom</tissue>
    </source>
</reference>
<reference key="3">
    <citation type="journal article" date="2006" name="Mol. Cell. Proteomics">
        <title>Molecular diversity in venom from the Australian Brown snake, Pseudonaja textilis.</title>
        <authorList>
            <person name="Birrell G.W."/>
            <person name="Earl S."/>
            <person name="Masci P.P."/>
            <person name="de Jersey J."/>
            <person name="Wallis T.P."/>
            <person name="Gorman J.J."/>
            <person name="Lavin M.F."/>
        </authorList>
    </citation>
    <scope>IDENTIFICATION BY MASS SPECTROMETRY</scope>
    <source>
        <tissue>Venom</tissue>
    </source>
</reference>
<reference key="4">
    <citation type="journal article" date="2009" name="Proteins">
        <title>The major toxin from the Australian common brown snake is a hexamer with unusual gas-phase dissociation properties.</title>
        <authorList>
            <person name="Aquilina J.A."/>
        </authorList>
    </citation>
    <scope>SUBUNIT</scope>
    <scope>IDENTIFICATION BY MASS SPECTROMETRY</scope>
    <source>
        <tissue>Venom</tissue>
    </source>
</reference>
<protein>
    <recommendedName>
        <fullName>Acidic phospholipase A2 homolog textilotoxin C chain</fullName>
        <shortName>svPLA2 homolog</shortName>
    </recommendedName>
</protein>
<dbReference type="EMBL" id="DQ085828">
    <property type="protein sequence ID" value="AAZ22646.1"/>
    <property type="molecule type" value="mRNA"/>
</dbReference>
<dbReference type="EMBL" id="DQ085829">
    <property type="protein sequence ID" value="AAZ22647.1"/>
    <property type="molecule type" value="mRNA"/>
</dbReference>
<dbReference type="EMBL" id="DQ085830">
    <property type="protein sequence ID" value="AAZ22648.1"/>
    <property type="molecule type" value="mRNA"/>
</dbReference>
<dbReference type="PIR" id="S29653">
    <property type="entry name" value="S29653"/>
</dbReference>
<dbReference type="RefSeq" id="XP_026581436.1">
    <property type="nucleotide sequence ID" value="XM_026725651.1"/>
</dbReference>
<dbReference type="SMR" id="P30811"/>
<dbReference type="GeneID" id="113454258"/>
<dbReference type="OrthoDB" id="5841574at2759"/>
<dbReference type="Proteomes" id="UP000472273">
    <property type="component" value="Unplaced"/>
</dbReference>
<dbReference type="GO" id="GO:0005576">
    <property type="term" value="C:extracellular region"/>
    <property type="evidence" value="ECO:0007669"/>
    <property type="project" value="UniProtKB-SubCell"/>
</dbReference>
<dbReference type="GO" id="GO:0005509">
    <property type="term" value="F:calcium ion binding"/>
    <property type="evidence" value="ECO:0007669"/>
    <property type="project" value="InterPro"/>
</dbReference>
<dbReference type="GO" id="GO:0047498">
    <property type="term" value="F:calcium-dependent phospholipase A2 activity"/>
    <property type="evidence" value="ECO:0007669"/>
    <property type="project" value="TreeGrafter"/>
</dbReference>
<dbReference type="GO" id="GO:0005543">
    <property type="term" value="F:phospholipid binding"/>
    <property type="evidence" value="ECO:0007669"/>
    <property type="project" value="TreeGrafter"/>
</dbReference>
<dbReference type="GO" id="GO:0090729">
    <property type="term" value="F:toxin activity"/>
    <property type="evidence" value="ECO:0007669"/>
    <property type="project" value="UniProtKB-KW"/>
</dbReference>
<dbReference type="GO" id="GO:0050482">
    <property type="term" value="P:arachidonate secretion"/>
    <property type="evidence" value="ECO:0007669"/>
    <property type="project" value="InterPro"/>
</dbReference>
<dbReference type="GO" id="GO:0016042">
    <property type="term" value="P:lipid catabolic process"/>
    <property type="evidence" value="ECO:0007669"/>
    <property type="project" value="InterPro"/>
</dbReference>
<dbReference type="GO" id="GO:0006644">
    <property type="term" value="P:phospholipid metabolic process"/>
    <property type="evidence" value="ECO:0007669"/>
    <property type="project" value="InterPro"/>
</dbReference>
<dbReference type="CDD" id="cd00125">
    <property type="entry name" value="PLA2c"/>
    <property type="match status" value="1"/>
</dbReference>
<dbReference type="FunFam" id="1.20.90.10:FF:000007">
    <property type="entry name" value="Acidic phospholipase A2"/>
    <property type="match status" value="1"/>
</dbReference>
<dbReference type="Gene3D" id="1.20.90.10">
    <property type="entry name" value="Phospholipase A2 domain"/>
    <property type="match status" value="1"/>
</dbReference>
<dbReference type="InterPro" id="IPR001211">
    <property type="entry name" value="PLipase_A2"/>
</dbReference>
<dbReference type="InterPro" id="IPR033112">
    <property type="entry name" value="PLipase_A2_Asp_AS"/>
</dbReference>
<dbReference type="InterPro" id="IPR016090">
    <property type="entry name" value="PLipase_A2_dom"/>
</dbReference>
<dbReference type="InterPro" id="IPR036444">
    <property type="entry name" value="PLipase_A2_dom_sf"/>
</dbReference>
<dbReference type="InterPro" id="IPR033113">
    <property type="entry name" value="PLipase_A2_His_AS"/>
</dbReference>
<dbReference type="PANTHER" id="PTHR11716:SF94">
    <property type="entry name" value="PHOSPHOLIPASE A2"/>
    <property type="match status" value="1"/>
</dbReference>
<dbReference type="PANTHER" id="PTHR11716">
    <property type="entry name" value="PHOSPHOLIPASE A2 FAMILY MEMBER"/>
    <property type="match status" value="1"/>
</dbReference>
<dbReference type="Pfam" id="PF00068">
    <property type="entry name" value="Phospholip_A2_1"/>
    <property type="match status" value="1"/>
</dbReference>
<dbReference type="PRINTS" id="PR00389">
    <property type="entry name" value="PHPHLIPASEA2"/>
</dbReference>
<dbReference type="SMART" id="SM00085">
    <property type="entry name" value="PA2c"/>
    <property type="match status" value="1"/>
</dbReference>
<dbReference type="SUPFAM" id="SSF48619">
    <property type="entry name" value="Phospholipase A2, PLA2"/>
    <property type="match status" value="1"/>
</dbReference>
<dbReference type="PROSITE" id="PS00119">
    <property type="entry name" value="PA2_ASP"/>
    <property type="match status" value="1"/>
</dbReference>
<dbReference type="PROSITE" id="PS00118">
    <property type="entry name" value="PA2_HIS"/>
    <property type="match status" value="1"/>
</dbReference>
<proteinExistence type="evidence at protein level"/>
<name>PA2HC_PSETE</name>
<accession>P30811</accession>
<accession>Q45Z36</accession>
<accession>Q45Z37</accession>
<accession>Q45Z38</accession>
<sequence length="145" mass="15855">MHPAHLLVLLGVYVSLLGAARIPPLPLNLIQFSNMIKCTIPGSQPLLDYANYGCYCGPGNNGTPVDDVDRCCQAHDECYDEASNHGCYPELTLYDYYCDTGVPYCKARTQCQVFVCGCDLAVAKCLAGATYNDENKNINTGERCQ</sequence>